<accession>Q2G2Z1</accession>
<gene>
    <name evidence="1" type="primary">mnmA</name>
    <name type="ordered locus">Saro_0043</name>
</gene>
<name>MNMA_NOVAD</name>
<sequence length="384" mass="40725">MPRTSALSGASSLFDLDGPMSARRIVVAMSGGVDSSVVAGLAAATGAEVIGVTLQLYDYGAATGRKGACCAGDDIRDARAVADRLGIAHYVFDHESSFREEVVERFADDYLSGRTPIPCVRCNMGPKFTDLLAMARELGADCLATGHYVRRVMGPAGPELHRAVDPARDQSYFLYGTTEEQLAFLRFPLGGLPKTETRLIAEELGLAVAAKPDSQDICFVPDGDYARVVRSVRPEGDAPGEIVHAATGEVLGTHRGIIHYTVGQRRGLEIGGQPEPLYVIGLDAPSRRVLVGPRPMLAVASATIVETNRIGPLPDAPLTAKVRSLARPVPVVLEGSFGEGASARIRFSQPEYGVAPGQAAVLYAGDRVVGGGWIDSTERWEIEG</sequence>
<feature type="chain" id="PRO_0000349724" description="tRNA-specific 2-thiouridylase MnmA">
    <location>
        <begin position="1"/>
        <end position="384"/>
    </location>
</feature>
<feature type="region of interest" description="Interaction with tRNA" evidence="1">
    <location>
        <begin position="168"/>
        <end position="170"/>
    </location>
</feature>
<feature type="active site" description="Nucleophile" evidence="1">
    <location>
        <position position="122"/>
    </location>
</feature>
<feature type="active site" description="Cysteine persulfide intermediate" evidence="1">
    <location>
        <position position="218"/>
    </location>
</feature>
<feature type="binding site" evidence="1">
    <location>
        <begin position="28"/>
        <end position="35"/>
    </location>
    <ligand>
        <name>ATP</name>
        <dbReference type="ChEBI" id="CHEBI:30616"/>
    </ligand>
</feature>
<feature type="binding site" evidence="1">
    <location>
        <position position="54"/>
    </location>
    <ligand>
        <name>ATP</name>
        <dbReference type="ChEBI" id="CHEBI:30616"/>
    </ligand>
</feature>
<feature type="binding site" evidence="1">
    <location>
        <position position="146"/>
    </location>
    <ligand>
        <name>ATP</name>
        <dbReference type="ChEBI" id="CHEBI:30616"/>
    </ligand>
</feature>
<feature type="site" description="Interaction with tRNA" evidence="1">
    <location>
        <position position="147"/>
    </location>
</feature>
<feature type="site" description="Interaction with tRNA" evidence="1">
    <location>
        <position position="358"/>
    </location>
</feature>
<feature type="disulfide bond" description="Alternate" evidence="1">
    <location>
        <begin position="122"/>
        <end position="218"/>
    </location>
</feature>
<organism>
    <name type="scientific">Novosphingobium aromaticivorans (strain ATCC 700278 / DSM 12444 / CCUG 56034 / CIP 105152 / NBRC 16084 / F199)</name>
    <dbReference type="NCBI Taxonomy" id="279238"/>
    <lineage>
        <taxon>Bacteria</taxon>
        <taxon>Pseudomonadati</taxon>
        <taxon>Pseudomonadota</taxon>
        <taxon>Alphaproteobacteria</taxon>
        <taxon>Sphingomonadales</taxon>
        <taxon>Sphingomonadaceae</taxon>
        <taxon>Novosphingobium</taxon>
    </lineage>
</organism>
<protein>
    <recommendedName>
        <fullName evidence="1">tRNA-specific 2-thiouridylase MnmA</fullName>
        <ecNumber evidence="1">2.8.1.13</ecNumber>
    </recommendedName>
</protein>
<comment type="function">
    <text evidence="1">Catalyzes the 2-thiolation of uridine at the wobble position (U34) of tRNA, leading to the formation of s(2)U34.</text>
</comment>
<comment type="catalytic activity">
    <reaction evidence="1">
        <text>S-sulfanyl-L-cysteinyl-[protein] + uridine(34) in tRNA + AH2 + ATP = 2-thiouridine(34) in tRNA + L-cysteinyl-[protein] + A + AMP + diphosphate + H(+)</text>
        <dbReference type="Rhea" id="RHEA:47032"/>
        <dbReference type="Rhea" id="RHEA-COMP:10131"/>
        <dbReference type="Rhea" id="RHEA-COMP:11726"/>
        <dbReference type="Rhea" id="RHEA-COMP:11727"/>
        <dbReference type="Rhea" id="RHEA-COMP:11728"/>
        <dbReference type="ChEBI" id="CHEBI:13193"/>
        <dbReference type="ChEBI" id="CHEBI:15378"/>
        <dbReference type="ChEBI" id="CHEBI:17499"/>
        <dbReference type="ChEBI" id="CHEBI:29950"/>
        <dbReference type="ChEBI" id="CHEBI:30616"/>
        <dbReference type="ChEBI" id="CHEBI:33019"/>
        <dbReference type="ChEBI" id="CHEBI:61963"/>
        <dbReference type="ChEBI" id="CHEBI:65315"/>
        <dbReference type="ChEBI" id="CHEBI:87170"/>
        <dbReference type="ChEBI" id="CHEBI:456215"/>
        <dbReference type="EC" id="2.8.1.13"/>
    </reaction>
</comment>
<comment type="subcellular location">
    <subcellularLocation>
        <location evidence="1">Cytoplasm</location>
    </subcellularLocation>
</comment>
<comment type="similarity">
    <text evidence="1">Belongs to the MnmA/TRMU family.</text>
</comment>
<evidence type="ECO:0000255" key="1">
    <source>
        <dbReference type="HAMAP-Rule" id="MF_00144"/>
    </source>
</evidence>
<reference key="1">
    <citation type="submission" date="2006-01" db="EMBL/GenBank/DDBJ databases">
        <title>Complete sequence of Novosphingobium aromaticivorans DSM 12444.</title>
        <authorList>
            <consortium name="US DOE Joint Genome Institute"/>
            <person name="Copeland A."/>
            <person name="Lucas S."/>
            <person name="Lapidus A."/>
            <person name="Barry K."/>
            <person name="Detter J.C."/>
            <person name="Glavina T."/>
            <person name="Hammon N."/>
            <person name="Israni S."/>
            <person name="Pitluck S."/>
            <person name="Chain P."/>
            <person name="Malfatti S."/>
            <person name="Shin M."/>
            <person name="Vergez L."/>
            <person name="Schmutz J."/>
            <person name="Larimer F."/>
            <person name="Land M."/>
            <person name="Kyrpides N."/>
            <person name="Ivanova N."/>
            <person name="Fredrickson J."/>
            <person name="Balkwill D."/>
            <person name="Romine M.F."/>
            <person name="Richardson P."/>
        </authorList>
    </citation>
    <scope>NUCLEOTIDE SEQUENCE [LARGE SCALE GENOMIC DNA]</scope>
    <source>
        <strain>ATCC 700278 / DSM 12444 / CCUG 56034 / CIP 105152 / NBRC 16084 / F199</strain>
    </source>
</reference>
<dbReference type="EC" id="2.8.1.13" evidence="1"/>
<dbReference type="EMBL" id="CP000248">
    <property type="protein sequence ID" value="ABD24492.1"/>
    <property type="molecule type" value="Genomic_DNA"/>
</dbReference>
<dbReference type="RefSeq" id="WP_011443706.1">
    <property type="nucleotide sequence ID" value="NC_007794.1"/>
</dbReference>
<dbReference type="SMR" id="Q2G2Z1"/>
<dbReference type="STRING" id="279238.Saro_0043"/>
<dbReference type="KEGG" id="nar:Saro_0043"/>
<dbReference type="eggNOG" id="COG0482">
    <property type="taxonomic scope" value="Bacteria"/>
</dbReference>
<dbReference type="HOGENOM" id="CLU_035188_0_1_5"/>
<dbReference type="Proteomes" id="UP000009134">
    <property type="component" value="Chromosome"/>
</dbReference>
<dbReference type="GO" id="GO:0005737">
    <property type="term" value="C:cytoplasm"/>
    <property type="evidence" value="ECO:0007669"/>
    <property type="project" value="UniProtKB-SubCell"/>
</dbReference>
<dbReference type="GO" id="GO:0005524">
    <property type="term" value="F:ATP binding"/>
    <property type="evidence" value="ECO:0007669"/>
    <property type="project" value="UniProtKB-KW"/>
</dbReference>
<dbReference type="GO" id="GO:0000049">
    <property type="term" value="F:tRNA binding"/>
    <property type="evidence" value="ECO:0007669"/>
    <property type="project" value="UniProtKB-KW"/>
</dbReference>
<dbReference type="GO" id="GO:0103016">
    <property type="term" value="F:tRNA-uridine 2-sulfurtransferase activity"/>
    <property type="evidence" value="ECO:0007669"/>
    <property type="project" value="UniProtKB-EC"/>
</dbReference>
<dbReference type="GO" id="GO:0002143">
    <property type="term" value="P:tRNA wobble position uridine thiolation"/>
    <property type="evidence" value="ECO:0007669"/>
    <property type="project" value="TreeGrafter"/>
</dbReference>
<dbReference type="CDD" id="cd01998">
    <property type="entry name" value="MnmA_TRMU-like"/>
    <property type="match status" value="1"/>
</dbReference>
<dbReference type="Gene3D" id="2.30.30.280">
    <property type="entry name" value="Adenine nucleotide alpha hydrolases-like domains"/>
    <property type="match status" value="1"/>
</dbReference>
<dbReference type="Gene3D" id="3.40.50.620">
    <property type="entry name" value="HUPs"/>
    <property type="match status" value="1"/>
</dbReference>
<dbReference type="Gene3D" id="2.40.30.10">
    <property type="entry name" value="Translation factors"/>
    <property type="match status" value="1"/>
</dbReference>
<dbReference type="HAMAP" id="MF_00144">
    <property type="entry name" value="tRNA_thiouridyl_MnmA"/>
    <property type="match status" value="1"/>
</dbReference>
<dbReference type="InterPro" id="IPR004506">
    <property type="entry name" value="MnmA-like"/>
</dbReference>
<dbReference type="InterPro" id="IPR046885">
    <property type="entry name" value="MnmA-like_C"/>
</dbReference>
<dbReference type="InterPro" id="IPR046884">
    <property type="entry name" value="MnmA-like_central"/>
</dbReference>
<dbReference type="InterPro" id="IPR023382">
    <property type="entry name" value="MnmA-like_central_sf"/>
</dbReference>
<dbReference type="InterPro" id="IPR014729">
    <property type="entry name" value="Rossmann-like_a/b/a_fold"/>
</dbReference>
<dbReference type="NCBIfam" id="NF001138">
    <property type="entry name" value="PRK00143.1"/>
    <property type="match status" value="1"/>
</dbReference>
<dbReference type="NCBIfam" id="TIGR00420">
    <property type="entry name" value="trmU"/>
    <property type="match status" value="1"/>
</dbReference>
<dbReference type="PANTHER" id="PTHR11933:SF5">
    <property type="entry name" value="MITOCHONDRIAL TRNA-SPECIFIC 2-THIOURIDYLASE 1"/>
    <property type="match status" value="1"/>
</dbReference>
<dbReference type="PANTHER" id="PTHR11933">
    <property type="entry name" value="TRNA 5-METHYLAMINOMETHYL-2-THIOURIDYLATE -METHYLTRANSFERASE"/>
    <property type="match status" value="1"/>
</dbReference>
<dbReference type="Pfam" id="PF03054">
    <property type="entry name" value="tRNA_Me_trans"/>
    <property type="match status" value="1"/>
</dbReference>
<dbReference type="Pfam" id="PF20258">
    <property type="entry name" value="tRNA_Me_trans_C"/>
    <property type="match status" value="1"/>
</dbReference>
<dbReference type="Pfam" id="PF20259">
    <property type="entry name" value="tRNA_Me_trans_M"/>
    <property type="match status" value="1"/>
</dbReference>
<dbReference type="SUPFAM" id="SSF52402">
    <property type="entry name" value="Adenine nucleotide alpha hydrolases-like"/>
    <property type="match status" value="1"/>
</dbReference>
<keyword id="KW-0067">ATP-binding</keyword>
<keyword id="KW-0963">Cytoplasm</keyword>
<keyword id="KW-1015">Disulfide bond</keyword>
<keyword id="KW-0547">Nucleotide-binding</keyword>
<keyword id="KW-1185">Reference proteome</keyword>
<keyword id="KW-0694">RNA-binding</keyword>
<keyword id="KW-0808">Transferase</keyword>
<keyword id="KW-0819">tRNA processing</keyword>
<keyword id="KW-0820">tRNA-binding</keyword>
<proteinExistence type="inferred from homology"/>